<sequence length="361" mass="40429">MTVSTAQMRFWSPEVRELEPYVPGEQPKIQNLLKLNTNENPYPPSPKVVEAVQAVLHEQADALRLYPDPDATALKQAIAKQQNIDVSQVFVGNGSDEVLAHIFKAFFLQDEPILYPDITYSFYPVYSQFFGTKTKEIPLNESFEIDVRDYTQPNGGVIITNPNAPTSIALSLAEIEQVLQANPDRVVVIDEAYVDFGAESAVSLINRYENLVVCQTTSKSRSLAGLRVGFAIAQSHLIAALEAVKNSFNSYPIDRFAIAAAVASFEDQAYFEEQCQKVITSREKLVRDLTELGFNVLPSKANFIFATHSQHDAGQLAQKLREQGIIVRYFNKPRINQFLRITVGTDEQNARLVQTLKQDIL</sequence>
<protein>
    <recommendedName>
        <fullName evidence="1">Histidinol-phosphate aminotransferase</fullName>
        <ecNumber evidence="1">2.6.1.9</ecNumber>
    </recommendedName>
    <alternativeName>
        <fullName evidence="1">Imidazole acetol-phosphate transaminase</fullName>
    </alternativeName>
</protein>
<organism>
    <name type="scientific">Acinetobacter baumannii (strain AB0057)</name>
    <dbReference type="NCBI Taxonomy" id="480119"/>
    <lineage>
        <taxon>Bacteria</taxon>
        <taxon>Pseudomonadati</taxon>
        <taxon>Pseudomonadota</taxon>
        <taxon>Gammaproteobacteria</taxon>
        <taxon>Moraxellales</taxon>
        <taxon>Moraxellaceae</taxon>
        <taxon>Acinetobacter</taxon>
        <taxon>Acinetobacter calcoaceticus/baumannii complex</taxon>
    </lineage>
</organism>
<dbReference type="EC" id="2.6.1.9" evidence="1"/>
<dbReference type="EMBL" id="CP001182">
    <property type="protein sequence ID" value="ACJ40536.1"/>
    <property type="molecule type" value="Genomic_DNA"/>
</dbReference>
<dbReference type="RefSeq" id="WP_000218880.1">
    <property type="nucleotide sequence ID" value="NC_011586.2"/>
</dbReference>
<dbReference type="SMR" id="B7I6C5"/>
<dbReference type="KEGG" id="abn:AB57_0737"/>
<dbReference type="HOGENOM" id="CLU_017584_3_0_6"/>
<dbReference type="UniPathway" id="UPA00031">
    <property type="reaction ID" value="UER00012"/>
</dbReference>
<dbReference type="Proteomes" id="UP000007094">
    <property type="component" value="Chromosome"/>
</dbReference>
<dbReference type="GO" id="GO:0004400">
    <property type="term" value="F:histidinol-phosphate transaminase activity"/>
    <property type="evidence" value="ECO:0007669"/>
    <property type="project" value="UniProtKB-UniRule"/>
</dbReference>
<dbReference type="GO" id="GO:0030170">
    <property type="term" value="F:pyridoxal phosphate binding"/>
    <property type="evidence" value="ECO:0007669"/>
    <property type="project" value="InterPro"/>
</dbReference>
<dbReference type="GO" id="GO:0000105">
    <property type="term" value="P:L-histidine biosynthetic process"/>
    <property type="evidence" value="ECO:0007669"/>
    <property type="project" value="UniProtKB-UniRule"/>
</dbReference>
<dbReference type="CDD" id="cd00609">
    <property type="entry name" value="AAT_like"/>
    <property type="match status" value="1"/>
</dbReference>
<dbReference type="Gene3D" id="3.90.1150.10">
    <property type="entry name" value="Aspartate Aminotransferase, domain 1"/>
    <property type="match status" value="1"/>
</dbReference>
<dbReference type="Gene3D" id="3.40.640.10">
    <property type="entry name" value="Type I PLP-dependent aspartate aminotransferase-like (Major domain)"/>
    <property type="match status" value="1"/>
</dbReference>
<dbReference type="HAMAP" id="MF_01023">
    <property type="entry name" value="HisC_aminotrans_2"/>
    <property type="match status" value="1"/>
</dbReference>
<dbReference type="InterPro" id="IPR004839">
    <property type="entry name" value="Aminotransferase_I/II_large"/>
</dbReference>
<dbReference type="InterPro" id="IPR005861">
    <property type="entry name" value="HisP_aminotrans"/>
</dbReference>
<dbReference type="InterPro" id="IPR050106">
    <property type="entry name" value="HistidinolP_aminotransfase"/>
</dbReference>
<dbReference type="InterPro" id="IPR015424">
    <property type="entry name" value="PyrdxlP-dep_Trfase"/>
</dbReference>
<dbReference type="InterPro" id="IPR015421">
    <property type="entry name" value="PyrdxlP-dep_Trfase_major"/>
</dbReference>
<dbReference type="InterPro" id="IPR015422">
    <property type="entry name" value="PyrdxlP-dep_Trfase_small"/>
</dbReference>
<dbReference type="NCBIfam" id="TIGR01141">
    <property type="entry name" value="hisC"/>
    <property type="match status" value="1"/>
</dbReference>
<dbReference type="PANTHER" id="PTHR43643:SF3">
    <property type="entry name" value="HISTIDINOL-PHOSPHATE AMINOTRANSFERASE"/>
    <property type="match status" value="1"/>
</dbReference>
<dbReference type="PANTHER" id="PTHR43643">
    <property type="entry name" value="HISTIDINOL-PHOSPHATE AMINOTRANSFERASE 2"/>
    <property type="match status" value="1"/>
</dbReference>
<dbReference type="Pfam" id="PF00155">
    <property type="entry name" value="Aminotran_1_2"/>
    <property type="match status" value="1"/>
</dbReference>
<dbReference type="SUPFAM" id="SSF53383">
    <property type="entry name" value="PLP-dependent transferases"/>
    <property type="match status" value="1"/>
</dbReference>
<evidence type="ECO:0000255" key="1">
    <source>
        <dbReference type="HAMAP-Rule" id="MF_01023"/>
    </source>
</evidence>
<comment type="catalytic activity">
    <reaction evidence="1">
        <text>L-histidinol phosphate + 2-oxoglutarate = 3-(imidazol-4-yl)-2-oxopropyl phosphate + L-glutamate</text>
        <dbReference type="Rhea" id="RHEA:23744"/>
        <dbReference type="ChEBI" id="CHEBI:16810"/>
        <dbReference type="ChEBI" id="CHEBI:29985"/>
        <dbReference type="ChEBI" id="CHEBI:57766"/>
        <dbReference type="ChEBI" id="CHEBI:57980"/>
        <dbReference type="EC" id="2.6.1.9"/>
    </reaction>
</comment>
<comment type="cofactor">
    <cofactor evidence="1">
        <name>pyridoxal 5'-phosphate</name>
        <dbReference type="ChEBI" id="CHEBI:597326"/>
    </cofactor>
</comment>
<comment type="pathway">
    <text evidence="1">Amino-acid biosynthesis; L-histidine biosynthesis; L-histidine from 5-phospho-alpha-D-ribose 1-diphosphate: step 7/9.</text>
</comment>
<comment type="subunit">
    <text evidence="1">Homodimer.</text>
</comment>
<comment type="similarity">
    <text evidence="1">Belongs to the class-II pyridoxal-phosphate-dependent aminotransferase family. Histidinol-phosphate aminotransferase subfamily.</text>
</comment>
<feature type="chain" id="PRO_1000135377" description="Histidinol-phosphate aminotransferase">
    <location>
        <begin position="1"/>
        <end position="361"/>
    </location>
</feature>
<feature type="modified residue" description="N6-(pyridoxal phosphate)lysine" evidence="1">
    <location>
        <position position="219"/>
    </location>
</feature>
<gene>
    <name evidence="1" type="primary">hisC</name>
    <name type="ordered locus">AB57_0737</name>
</gene>
<name>HIS8_ACIB5</name>
<keyword id="KW-0028">Amino-acid biosynthesis</keyword>
<keyword id="KW-0032">Aminotransferase</keyword>
<keyword id="KW-0368">Histidine biosynthesis</keyword>
<keyword id="KW-0663">Pyridoxal phosphate</keyword>
<keyword id="KW-0808">Transferase</keyword>
<accession>B7I6C5</accession>
<reference key="1">
    <citation type="journal article" date="2008" name="J. Bacteriol.">
        <title>Comparative genome sequence analysis of multidrug-resistant Acinetobacter baumannii.</title>
        <authorList>
            <person name="Adams M.D."/>
            <person name="Goglin K."/>
            <person name="Molyneaux N."/>
            <person name="Hujer K.M."/>
            <person name="Lavender H."/>
            <person name="Jamison J.J."/>
            <person name="MacDonald I.J."/>
            <person name="Martin K.M."/>
            <person name="Russo T."/>
            <person name="Campagnari A.A."/>
            <person name="Hujer A.M."/>
            <person name="Bonomo R.A."/>
            <person name="Gill S.R."/>
        </authorList>
    </citation>
    <scope>NUCLEOTIDE SEQUENCE [LARGE SCALE GENOMIC DNA]</scope>
    <source>
        <strain>AB0057</strain>
    </source>
</reference>
<proteinExistence type="inferred from homology"/>